<proteinExistence type="inferred from homology"/>
<keyword id="KW-0256">Endoplasmic reticulum</keyword>
<keyword id="KW-0445">Lipid transport</keyword>
<keyword id="KW-0446">Lipid-binding</keyword>
<keyword id="KW-0472">Membrane</keyword>
<keyword id="KW-1185">Reference proteome</keyword>
<keyword id="KW-0812">Transmembrane</keyword>
<keyword id="KW-1133">Transmembrane helix</keyword>
<keyword id="KW-0813">Transport</keyword>
<reference key="1">
    <citation type="journal article" date="2005" name="Nature">
        <title>Genome sequencing and analysis of Aspergillus oryzae.</title>
        <authorList>
            <person name="Machida M."/>
            <person name="Asai K."/>
            <person name="Sano M."/>
            <person name="Tanaka T."/>
            <person name="Kumagai T."/>
            <person name="Terai G."/>
            <person name="Kusumoto K."/>
            <person name="Arima T."/>
            <person name="Akita O."/>
            <person name="Kashiwagi Y."/>
            <person name="Abe K."/>
            <person name="Gomi K."/>
            <person name="Horiuchi H."/>
            <person name="Kitamoto K."/>
            <person name="Kobayashi T."/>
            <person name="Takeuchi M."/>
            <person name="Denning D.W."/>
            <person name="Galagan J.E."/>
            <person name="Nierman W.C."/>
            <person name="Yu J."/>
            <person name="Archer D.B."/>
            <person name="Bennett J.W."/>
            <person name="Bhatnagar D."/>
            <person name="Cleveland T.E."/>
            <person name="Fedorova N.D."/>
            <person name="Gotoh O."/>
            <person name="Horikawa H."/>
            <person name="Hosoyama A."/>
            <person name="Ichinomiya M."/>
            <person name="Igarashi R."/>
            <person name="Iwashita K."/>
            <person name="Juvvadi P.R."/>
            <person name="Kato M."/>
            <person name="Kato Y."/>
            <person name="Kin T."/>
            <person name="Kokubun A."/>
            <person name="Maeda H."/>
            <person name="Maeyama N."/>
            <person name="Maruyama J."/>
            <person name="Nagasaki H."/>
            <person name="Nakajima T."/>
            <person name="Oda K."/>
            <person name="Okada K."/>
            <person name="Paulsen I."/>
            <person name="Sakamoto K."/>
            <person name="Sawano T."/>
            <person name="Takahashi M."/>
            <person name="Takase K."/>
            <person name="Terabayashi Y."/>
            <person name="Wortman J.R."/>
            <person name="Yamada O."/>
            <person name="Yamagata Y."/>
            <person name="Anazawa H."/>
            <person name="Hata Y."/>
            <person name="Koide Y."/>
            <person name="Komori T."/>
            <person name="Koyama Y."/>
            <person name="Minetoki T."/>
            <person name="Suharnan S."/>
            <person name="Tanaka A."/>
            <person name="Isono K."/>
            <person name="Kuhara S."/>
            <person name="Ogasawara N."/>
            <person name="Kikuchi H."/>
        </authorList>
    </citation>
    <scope>NUCLEOTIDE SEQUENCE [LARGE SCALE GENOMIC DNA]</scope>
    <source>
        <strain>ATCC 42149 / RIB 40</strain>
    </source>
</reference>
<evidence type="ECO:0000255" key="1">
    <source>
        <dbReference type="HAMAP-Rule" id="MF_03103"/>
    </source>
</evidence>
<evidence type="ECO:0000256" key="2">
    <source>
        <dbReference type="SAM" id="MobiDB-lite"/>
    </source>
</evidence>
<feature type="chain" id="PRO_0000384217" description="Maintenance of mitochondrial morphology protein 1">
    <location>
        <begin position="1"/>
        <end position="494"/>
    </location>
</feature>
<feature type="topological domain" description="Lumenal" evidence="1">
    <location>
        <begin position="1"/>
        <end position="25"/>
    </location>
</feature>
<feature type="transmembrane region" description="Helical" evidence="1">
    <location>
        <begin position="26"/>
        <end position="46"/>
    </location>
</feature>
<feature type="topological domain" description="Cytoplasmic" evidence="1">
    <location>
        <begin position="47"/>
        <end position="494"/>
    </location>
</feature>
<feature type="domain" description="SMP-LTD" evidence="1">
    <location>
        <begin position="134"/>
        <end position="387"/>
    </location>
</feature>
<feature type="region of interest" description="Disordered" evidence="2">
    <location>
        <begin position="53"/>
        <end position="99"/>
    </location>
</feature>
<feature type="region of interest" description="Disordered" evidence="2">
    <location>
        <begin position="278"/>
        <end position="330"/>
    </location>
</feature>
<feature type="region of interest" description="Disordered" evidence="2">
    <location>
        <begin position="395"/>
        <end position="494"/>
    </location>
</feature>
<feature type="compositionally biased region" description="Basic residues" evidence="2">
    <location>
        <begin position="57"/>
        <end position="67"/>
    </location>
</feature>
<feature type="compositionally biased region" description="Polar residues" evidence="2">
    <location>
        <begin position="68"/>
        <end position="81"/>
    </location>
</feature>
<feature type="compositionally biased region" description="Polar residues" evidence="2">
    <location>
        <begin position="88"/>
        <end position="99"/>
    </location>
</feature>
<feature type="compositionally biased region" description="Pro residues" evidence="2">
    <location>
        <begin position="278"/>
        <end position="290"/>
    </location>
</feature>
<feature type="compositionally biased region" description="Polar residues" evidence="2">
    <location>
        <begin position="300"/>
        <end position="318"/>
    </location>
</feature>
<feature type="compositionally biased region" description="Polar residues" evidence="2">
    <location>
        <begin position="406"/>
        <end position="415"/>
    </location>
</feature>
<feature type="compositionally biased region" description="Basic and acidic residues" evidence="2">
    <location>
        <begin position="425"/>
        <end position="437"/>
    </location>
</feature>
<protein>
    <recommendedName>
        <fullName evidence="1">Maintenance of mitochondrial morphology protein 1</fullName>
    </recommendedName>
</protein>
<accession>Q2U9A7</accession>
<organism>
    <name type="scientific">Aspergillus oryzae (strain ATCC 42149 / RIB 40)</name>
    <name type="common">Yellow koji mold</name>
    <dbReference type="NCBI Taxonomy" id="510516"/>
    <lineage>
        <taxon>Eukaryota</taxon>
        <taxon>Fungi</taxon>
        <taxon>Dikarya</taxon>
        <taxon>Ascomycota</taxon>
        <taxon>Pezizomycotina</taxon>
        <taxon>Eurotiomycetes</taxon>
        <taxon>Eurotiomycetidae</taxon>
        <taxon>Eurotiales</taxon>
        <taxon>Aspergillaceae</taxon>
        <taxon>Aspergillus</taxon>
        <taxon>Aspergillus subgen. Circumdati</taxon>
    </lineage>
</organism>
<name>MMM1_ASPOR</name>
<gene>
    <name evidence="1" type="primary">mmm1</name>
    <name type="ORF">AO090701000106</name>
</gene>
<comment type="function">
    <text evidence="1">Component of the ERMES/MDM complex, which serves as a molecular tether to connect the endoplasmic reticulum (ER) and mitochondria. Components of this complex are involved in the control of mitochondrial shape and protein biogenesis, and function in nonvesicular lipid trafficking between the ER and mitochondria. The mdm12-mmm1 subcomplex functions in the major beta-barrel assembly pathway that is responsible for biogenesis of all outer membrane beta-barrel proteins, and acts in a late step after the SAM complex. The mdm10-mdm12-mmm1 subcomplex further acts in the TOM40-specific pathway after the action of the mdm12-mmm1 complex. Essential for establishing and maintaining the structure of mitochondria and maintenance of mtDNA nucleoids.</text>
</comment>
<comment type="subunit">
    <text evidence="1">Homodimer. Component of the ER-mitochondria encounter structure (ERMES) or MDM complex, composed of mmm1, mdm10, mdm12 and mdm34. A mmm1 homodimer associates with one molecule of mdm12 on each side in a pairwise head-to-tail manner, and the SMP-LTD domains of mmm1 and mdm12 generate a continuous hydrophobic tunnel for phospholipid trafficking.</text>
</comment>
<comment type="subcellular location">
    <subcellularLocation>
        <location evidence="1">Endoplasmic reticulum membrane</location>
        <topology evidence="1">Single-pass type I membrane protein</topology>
    </subcellularLocation>
    <text evidence="1">The ERMES/MDM complex localizes to a few discrete foci (around 10 per single cell), that represent mitochondria-endoplasmic reticulum junctions. These foci are often found next to mtDNA nucleoids.</text>
</comment>
<comment type="domain">
    <text evidence="1">The SMP-LTD domain is a barrel-like domain that can bind various types of glycerophospholipids in its interior and mediate their transfer between two adjacent bilayers.</text>
</comment>
<comment type="similarity">
    <text evidence="1">Belongs to the MMM1 family.</text>
</comment>
<sequence length="494" mass="53142">MGDDQSLRSTVAENDISANLSFTQGFLLGQLSVVLLIGAFIKFFIFGEAPPPPSRGLSHRASTHRRSNSIYTINPNEGTSRSLREKPSTSNVLRPVPSSATNTRSILRKTYYSAIPTNPSGKHGRHRIHHSSHQPESLDWFNVLIAQTIAQYRQTAYLLKDDPTSSILSSLTAALNNPEKKPSFIDKIAVTDISLGEEFPIFSNCRIIAVDDPNSDGGRLQALLDVDLSDDNLSIAVETSLLLNYPKPCSAILPVALSISVVRFSGTLCISLVPASTPPLHTPSPSPSPPTADGAVNAGTHPTNGSREPTQEAPNAQEESPPKTSPKSNVAFSFLPDYRLDLSVRSLIGSRSRLQDVPKVAQLVEARVHSWFEERVVEPRVQVVGLPDLWPRMGRTGVRTGEDSETGSNAASRSAMSADMGNSLRADDIGREPDGLRFRGLGARPPFDSVSRTSSFNVETGGFRSHSMTREGSGGGMSDDFHMPGTLPGGAAAN</sequence>
<dbReference type="EMBL" id="BA000053">
    <property type="protein sequence ID" value="BAE61858.1"/>
    <property type="molecule type" value="Genomic_DNA"/>
</dbReference>
<dbReference type="SMR" id="Q2U9A7"/>
<dbReference type="STRING" id="510516.Q2U9A7"/>
<dbReference type="EnsemblFungi" id="BAE61858">
    <property type="protein sequence ID" value="BAE61858"/>
    <property type="gene ID" value="AO090701000106"/>
</dbReference>
<dbReference type="HOGENOM" id="CLU_032730_1_0_1"/>
<dbReference type="Proteomes" id="UP000006564">
    <property type="component" value="Chromosome 5"/>
</dbReference>
<dbReference type="GO" id="GO:0005789">
    <property type="term" value="C:endoplasmic reticulum membrane"/>
    <property type="evidence" value="ECO:0007669"/>
    <property type="project" value="UniProtKB-SubCell"/>
</dbReference>
<dbReference type="GO" id="GO:0032865">
    <property type="term" value="C:ERMES complex"/>
    <property type="evidence" value="ECO:0007669"/>
    <property type="project" value="UniProtKB-UniRule"/>
</dbReference>
<dbReference type="GO" id="GO:0008289">
    <property type="term" value="F:lipid binding"/>
    <property type="evidence" value="ECO:0007669"/>
    <property type="project" value="UniProtKB-KW"/>
</dbReference>
<dbReference type="GO" id="GO:0000002">
    <property type="term" value="P:mitochondrial genome maintenance"/>
    <property type="evidence" value="ECO:0007669"/>
    <property type="project" value="UniProtKB-UniRule"/>
</dbReference>
<dbReference type="GO" id="GO:1990456">
    <property type="term" value="P:mitochondrion-endoplasmic reticulum membrane tethering"/>
    <property type="evidence" value="ECO:0007669"/>
    <property type="project" value="TreeGrafter"/>
</dbReference>
<dbReference type="GO" id="GO:0015914">
    <property type="term" value="P:phospholipid transport"/>
    <property type="evidence" value="ECO:0007669"/>
    <property type="project" value="TreeGrafter"/>
</dbReference>
<dbReference type="GO" id="GO:0045040">
    <property type="term" value="P:protein insertion into mitochondrial outer membrane"/>
    <property type="evidence" value="ECO:0007669"/>
    <property type="project" value="UniProtKB-UniRule"/>
</dbReference>
<dbReference type="CDD" id="cd21671">
    <property type="entry name" value="SMP_Mmm1"/>
    <property type="match status" value="1"/>
</dbReference>
<dbReference type="HAMAP" id="MF_03103">
    <property type="entry name" value="Mmm1"/>
    <property type="match status" value="1"/>
</dbReference>
<dbReference type="InterPro" id="IPR027537">
    <property type="entry name" value="Mmm1"/>
</dbReference>
<dbReference type="InterPro" id="IPR019411">
    <property type="entry name" value="MMM1_dom"/>
</dbReference>
<dbReference type="InterPro" id="IPR031468">
    <property type="entry name" value="SMP_LBD"/>
</dbReference>
<dbReference type="PANTHER" id="PTHR13466:SF0">
    <property type="entry name" value="SMP-LTD DOMAIN-CONTAINING PROTEIN"/>
    <property type="match status" value="1"/>
</dbReference>
<dbReference type="PANTHER" id="PTHR13466">
    <property type="entry name" value="TEX2 PROTEIN-RELATED"/>
    <property type="match status" value="1"/>
</dbReference>
<dbReference type="Pfam" id="PF10296">
    <property type="entry name" value="MMM1"/>
    <property type="match status" value="1"/>
</dbReference>
<dbReference type="PROSITE" id="PS51847">
    <property type="entry name" value="SMP"/>
    <property type="match status" value="1"/>
</dbReference>